<comment type="function">
    <text evidence="1">Murein-degrading enzyme that degrades murein glycan strands and insoluble, high-molecular weight murein sacculi, with the concomitant formation of a 1,6-anhydromuramoyl product. Lytic transglycosylases (LTs) play an integral role in the metabolism of the peptidoglycan (PG) sacculus. Their lytic action creates space within the PG sacculus to allow for its expansion as well as for the insertion of various structures such as secretion systems and flagella.</text>
</comment>
<comment type="catalytic activity">
    <reaction evidence="1">
        <text>Exolytic cleavage of the (1-&gt;4)-beta-glycosidic linkage between N-acetylmuramic acid (MurNAc) and N-acetylglucosamine (GlcNAc) residues in peptidoglycan, from either the reducing or the non-reducing ends of the peptidoglycan chains, with concomitant formation of a 1,6-anhydrobond in the MurNAc residue.</text>
        <dbReference type="EC" id="4.2.2.n1"/>
    </reaction>
</comment>
<comment type="subcellular location">
    <subcellularLocation>
        <location>Cell outer membrane</location>
        <topology>Peripheral membrane protein</topology>
    </subcellularLocation>
    <text evidence="1">Attached to the inner leaflet of the outer membrane.</text>
</comment>
<comment type="domain">
    <text evidence="1">The N-terminal domain does not have lytic activity and probably modulates enzymatic activity. The C-terminal domain is the catalytic active domain.</text>
</comment>
<comment type="similarity">
    <text evidence="1">In the N-terminal section; belongs to the bacterial solute-binding protein 3 family.</text>
</comment>
<comment type="similarity">
    <text evidence="1">In the C-terminal section; belongs to the transglycosylase Slt family.</text>
</comment>
<comment type="sequence caution" evidence="2">
    <conflict type="erroneous initiation">
        <sequence resource="EMBL-CDS" id="ABV17607"/>
    </conflict>
</comment>
<name>MLTF_ECO24</name>
<reference key="1">
    <citation type="journal article" date="2008" name="J. Bacteriol.">
        <title>The pangenome structure of Escherichia coli: comparative genomic analysis of E. coli commensal and pathogenic isolates.</title>
        <authorList>
            <person name="Rasko D.A."/>
            <person name="Rosovitz M.J."/>
            <person name="Myers G.S.A."/>
            <person name="Mongodin E.F."/>
            <person name="Fricke W.F."/>
            <person name="Gajer P."/>
            <person name="Crabtree J."/>
            <person name="Sebaihia M."/>
            <person name="Thomson N.R."/>
            <person name="Chaudhuri R."/>
            <person name="Henderson I.R."/>
            <person name="Sperandio V."/>
            <person name="Ravel J."/>
        </authorList>
    </citation>
    <scope>NUCLEOTIDE SEQUENCE [LARGE SCALE GENOMIC DNA]</scope>
    <source>
        <strain>E24377A / ETEC</strain>
    </source>
</reference>
<organism>
    <name type="scientific">Escherichia coli O139:H28 (strain E24377A / ETEC)</name>
    <dbReference type="NCBI Taxonomy" id="331111"/>
    <lineage>
        <taxon>Bacteria</taxon>
        <taxon>Pseudomonadati</taxon>
        <taxon>Pseudomonadota</taxon>
        <taxon>Gammaproteobacteria</taxon>
        <taxon>Enterobacterales</taxon>
        <taxon>Enterobacteriaceae</taxon>
        <taxon>Escherichia</taxon>
    </lineage>
</organism>
<keyword id="KW-0998">Cell outer membrane</keyword>
<keyword id="KW-0961">Cell wall biogenesis/degradation</keyword>
<keyword id="KW-0456">Lyase</keyword>
<keyword id="KW-0472">Membrane</keyword>
<keyword id="KW-1185">Reference proteome</keyword>
<keyword id="KW-0732">Signal</keyword>
<evidence type="ECO:0000255" key="1">
    <source>
        <dbReference type="HAMAP-Rule" id="MF_02016"/>
    </source>
</evidence>
<evidence type="ECO:0000305" key="2"/>
<dbReference type="EC" id="4.2.2.n1" evidence="1"/>
<dbReference type="EMBL" id="CP000800">
    <property type="protein sequence ID" value="ABV17607.1"/>
    <property type="status" value="ALT_INIT"/>
    <property type="molecule type" value="Genomic_DNA"/>
</dbReference>
<dbReference type="RefSeq" id="WP_000734193.1">
    <property type="nucleotide sequence ID" value="NC_009801.1"/>
</dbReference>
<dbReference type="SMR" id="A7ZQ01"/>
<dbReference type="CAZy" id="GH23">
    <property type="family name" value="Glycoside Hydrolase Family 23"/>
</dbReference>
<dbReference type="KEGG" id="ecw:EcE24377A_2844"/>
<dbReference type="HOGENOM" id="CLU_027494_0_1_6"/>
<dbReference type="Proteomes" id="UP000001122">
    <property type="component" value="Chromosome"/>
</dbReference>
<dbReference type="GO" id="GO:0009279">
    <property type="term" value="C:cell outer membrane"/>
    <property type="evidence" value="ECO:0007669"/>
    <property type="project" value="UniProtKB-SubCell"/>
</dbReference>
<dbReference type="GO" id="GO:0008933">
    <property type="term" value="F:peptidoglycan lytic transglycosylase activity"/>
    <property type="evidence" value="ECO:0007669"/>
    <property type="project" value="UniProtKB-UniRule"/>
</dbReference>
<dbReference type="GO" id="GO:0016998">
    <property type="term" value="P:cell wall macromolecule catabolic process"/>
    <property type="evidence" value="ECO:0007669"/>
    <property type="project" value="UniProtKB-UniRule"/>
</dbReference>
<dbReference type="GO" id="GO:0071555">
    <property type="term" value="P:cell wall organization"/>
    <property type="evidence" value="ECO:0007669"/>
    <property type="project" value="UniProtKB-KW"/>
</dbReference>
<dbReference type="GO" id="GO:0009253">
    <property type="term" value="P:peptidoglycan catabolic process"/>
    <property type="evidence" value="ECO:0007669"/>
    <property type="project" value="TreeGrafter"/>
</dbReference>
<dbReference type="CDD" id="cd13403">
    <property type="entry name" value="MLTF-like"/>
    <property type="match status" value="1"/>
</dbReference>
<dbReference type="CDD" id="cd01009">
    <property type="entry name" value="PBP2_YfhD_N"/>
    <property type="match status" value="1"/>
</dbReference>
<dbReference type="FunFam" id="1.10.530.10:FF:000003">
    <property type="entry name" value="Membrane-bound lytic murein transglycosylase F"/>
    <property type="match status" value="1"/>
</dbReference>
<dbReference type="FunFam" id="3.40.190.10:FF:000051">
    <property type="entry name" value="Membrane-bound lytic murein transglycosylase F"/>
    <property type="match status" value="1"/>
</dbReference>
<dbReference type="Gene3D" id="1.10.530.10">
    <property type="match status" value="1"/>
</dbReference>
<dbReference type="Gene3D" id="3.40.190.10">
    <property type="entry name" value="Periplasmic binding protein-like II"/>
    <property type="match status" value="2"/>
</dbReference>
<dbReference type="HAMAP" id="MF_02016">
    <property type="entry name" value="MltF"/>
    <property type="match status" value="1"/>
</dbReference>
<dbReference type="InterPro" id="IPR023346">
    <property type="entry name" value="Lysozyme-like_dom_sf"/>
</dbReference>
<dbReference type="InterPro" id="IPR023703">
    <property type="entry name" value="MltF"/>
</dbReference>
<dbReference type="InterPro" id="IPR001638">
    <property type="entry name" value="Solute-binding_3/MltF_N"/>
</dbReference>
<dbReference type="InterPro" id="IPR000189">
    <property type="entry name" value="Transglyc_AS"/>
</dbReference>
<dbReference type="InterPro" id="IPR008258">
    <property type="entry name" value="Transglycosylase_SLT_dom_1"/>
</dbReference>
<dbReference type="NCBIfam" id="NF008112">
    <property type="entry name" value="PRK10859.1"/>
    <property type="match status" value="1"/>
</dbReference>
<dbReference type="PANTHER" id="PTHR35936">
    <property type="entry name" value="MEMBRANE-BOUND LYTIC MUREIN TRANSGLYCOSYLASE F"/>
    <property type="match status" value="1"/>
</dbReference>
<dbReference type="PANTHER" id="PTHR35936:SF32">
    <property type="entry name" value="MEMBRANE-BOUND LYTIC MUREIN TRANSGLYCOSYLASE F"/>
    <property type="match status" value="1"/>
</dbReference>
<dbReference type="Pfam" id="PF00497">
    <property type="entry name" value="SBP_bac_3"/>
    <property type="match status" value="1"/>
</dbReference>
<dbReference type="Pfam" id="PF01464">
    <property type="entry name" value="SLT"/>
    <property type="match status" value="1"/>
</dbReference>
<dbReference type="SMART" id="SM00062">
    <property type="entry name" value="PBPb"/>
    <property type="match status" value="1"/>
</dbReference>
<dbReference type="SUPFAM" id="SSF53955">
    <property type="entry name" value="Lysozyme-like"/>
    <property type="match status" value="1"/>
</dbReference>
<dbReference type="SUPFAM" id="SSF53850">
    <property type="entry name" value="Periplasmic binding protein-like II"/>
    <property type="match status" value="1"/>
</dbReference>
<dbReference type="PROSITE" id="PS00922">
    <property type="entry name" value="TRANSGLYCOSYLASE"/>
    <property type="match status" value="1"/>
</dbReference>
<accession>A7ZQ01</accession>
<feature type="signal peptide" evidence="1">
    <location>
        <begin position="1"/>
        <end position="21"/>
    </location>
</feature>
<feature type="chain" id="PRO_0000353927" description="Membrane-bound lytic murein transglycosylase F">
    <location>
        <begin position="22"/>
        <end position="518"/>
    </location>
</feature>
<feature type="region of interest" description="Non-LT domain" evidence="1">
    <location>
        <begin position="22"/>
        <end position="269"/>
    </location>
</feature>
<feature type="region of interest" description="LT domain" evidence="1">
    <location>
        <begin position="270"/>
        <end position="518"/>
    </location>
</feature>
<feature type="active site" evidence="1">
    <location>
        <position position="314"/>
    </location>
</feature>
<protein>
    <recommendedName>
        <fullName evidence="1">Membrane-bound lytic murein transglycosylase F</fullName>
        <ecNumber evidence="1">4.2.2.n1</ecNumber>
    </recommendedName>
    <alternativeName>
        <fullName evidence="1">Murein lyase F</fullName>
    </alternativeName>
</protein>
<gene>
    <name evidence="1" type="primary">mltF</name>
    <name type="ordered locus">EcE24377A_2844</name>
</gene>
<proteinExistence type="inferred from homology"/>
<sequence>MKKLKINYLFIGILALLLAVALWPSIPWFGKADNRIAAIQARGELRVSTIHTPLTYNEINGKPFGLDYELAKQFADYLGVKLKVTVRQNISQLFDDLDNGNADLLAAGLVYNSERVKNYQPGPTYYSVSQQLVYKVGQYRPRTLGNLTAEQLTVAPGHVVVNDLQTLKDTKFPELSWKVDDKKGSAELMEDVIEGKLDYTIADSVAISLFQRVHPELAVALDITDEQPVTWFSPLDGDNTLSAALLDFFNEMNEDGTLARIEEKYLGHGDDFDYVDTRTFLRAVDAVLPQLKPLFEKYAEEIDWRLLAAIAYQESHWDAQATSPTGVRGMMMLTKNTAQSLGITDRTDAEQSISGGVRYLQDMMSKVPESVPENERIWFALAAYNMGYAHMLDARALTAKTKGNPDSWADVKQRLPLLSQKPYYSKLTYGYARGHEAYAYVENIRKYQISLVGYLQEKEKQATEAAMQLAQDYPAVSPTELGKEKFPFLSFLSQSSSNYLTHSPSLLFSRKGSEEKQN</sequence>